<reference key="1">
    <citation type="journal article" date="1998" name="Mol. Biol. Evol.">
        <title>Molecular systematics and paleobiogeography of the South American sigmodontine rodents.</title>
        <authorList>
            <person name="Engel S.R."/>
            <person name="Hogan K.M."/>
            <person name="Taylor J.F."/>
            <person name="Davis S.K."/>
        </authorList>
    </citation>
    <scope>NUCLEOTIDE SEQUENCE [GENOMIC DNA]</scope>
</reference>
<protein>
    <recommendedName>
        <fullName evidence="1">NADH-ubiquinone oxidoreductase chain 3</fullName>
        <ecNumber evidence="1">7.1.1.2</ecNumber>
    </recommendedName>
    <alternativeName>
        <fullName>NADH dehydrogenase subunit 3</fullName>
    </alternativeName>
</protein>
<geneLocation type="mitochondrion"/>
<sequence length="115" mass="13058">MNMIMAMLANISISSCLIIIAFWLPHLNIYTEKASPYECGFDPMSSARLPFSMKFFLVGITFLLFDLEIALLLPLPWALHSTNMFLTTLTSFILVSVLALGLAYEWMNKGLEWTE</sequence>
<comment type="function">
    <text evidence="1">Core subunit of the mitochondrial membrane respiratory chain NADH dehydrogenase (Complex I) which catalyzes electron transfer from NADH through the respiratory chain, using ubiquinone as an electron acceptor. Essential for the catalytic activity of complex I.</text>
</comment>
<comment type="catalytic activity">
    <reaction evidence="1">
        <text>a ubiquinone + NADH + 5 H(+)(in) = a ubiquinol + NAD(+) + 4 H(+)(out)</text>
        <dbReference type="Rhea" id="RHEA:29091"/>
        <dbReference type="Rhea" id="RHEA-COMP:9565"/>
        <dbReference type="Rhea" id="RHEA-COMP:9566"/>
        <dbReference type="ChEBI" id="CHEBI:15378"/>
        <dbReference type="ChEBI" id="CHEBI:16389"/>
        <dbReference type="ChEBI" id="CHEBI:17976"/>
        <dbReference type="ChEBI" id="CHEBI:57540"/>
        <dbReference type="ChEBI" id="CHEBI:57945"/>
        <dbReference type="EC" id="7.1.1.2"/>
    </reaction>
</comment>
<comment type="subunit">
    <text evidence="1">Core subunit of respiratory chain NADH dehydrogenase (Complex I) which is composed of 45 different subunits. Interacts with TMEM186. Interacts with TMEM242 (By similarity).</text>
</comment>
<comment type="subcellular location">
    <subcellularLocation>
        <location evidence="2">Mitochondrion inner membrane</location>
        <topology evidence="3">Multi-pass membrane protein</topology>
    </subcellularLocation>
</comment>
<comment type="similarity">
    <text evidence="4">Belongs to the complex I subunit 3 family.</text>
</comment>
<organism>
    <name type="scientific">Phyllotis darwinii</name>
    <name type="common">Darwin's leaf-eared mouse</name>
    <dbReference type="NCBI Taxonomy" id="3370561"/>
    <lineage>
        <taxon>Eukaryota</taxon>
        <taxon>Metazoa</taxon>
        <taxon>Chordata</taxon>
        <taxon>Craniata</taxon>
        <taxon>Vertebrata</taxon>
        <taxon>Euteleostomi</taxon>
        <taxon>Mammalia</taxon>
        <taxon>Eutheria</taxon>
        <taxon>Euarchontoglires</taxon>
        <taxon>Glires</taxon>
        <taxon>Rodentia</taxon>
        <taxon>Myomorpha</taxon>
        <taxon>Muroidea</taxon>
        <taxon>Cricetidae</taxon>
        <taxon>Sigmodontinae</taxon>
        <taxon>Phyllotis</taxon>
    </lineage>
</organism>
<accession>O21546</accession>
<proteinExistence type="inferred from homology"/>
<dbReference type="EC" id="7.1.1.2" evidence="1"/>
<dbReference type="EMBL" id="U83815">
    <property type="protein sequence ID" value="AAB87220.1"/>
    <property type="molecule type" value="Genomic_DNA"/>
</dbReference>
<dbReference type="SMR" id="O21546"/>
<dbReference type="GO" id="GO:0005743">
    <property type="term" value="C:mitochondrial inner membrane"/>
    <property type="evidence" value="ECO:0000250"/>
    <property type="project" value="UniProtKB"/>
</dbReference>
<dbReference type="GO" id="GO:0030964">
    <property type="term" value="C:NADH dehydrogenase complex"/>
    <property type="evidence" value="ECO:0007669"/>
    <property type="project" value="TreeGrafter"/>
</dbReference>
<dbReference type="GO" id="GO:0008137">
    <property type="term" value="F:NADH dehydrogenase (ubiquinone) activity"/>
    <property type="evidence" value="ECO:0000250"/>
    <property type="project" value="UniProtKB"/>
</dbReference>
<dbReference type="GO" id="GO:0006120">
    <property type="term" value="P:mitochondrial electron transport, NADH to ubiquinone"/>
    <property type="evidence" value="ECO:0000250"/>
    <property type="project" value="UniProtKB"/>
</dbReference>
<dbReference type="FunFam" id="1.20.58.1610:FF:000004">
    <property type="entry name" value="NADH-quinone oxidoreductase subunit A"/>
    <property type="match status" value="1"/>
</dbReference>
<dbReference type="Gene3D" id="1.20.58.1610">
    <property type="entry name" value="NADH:ubiquinone/plastoquinone oxidoreductase, chain 3"/>
    <property type="match status" value="1"/>
</dbReference>
<dbReference type="InterPro" id="IPR000440">
    <property type="entry name" value="NADH_UbQ/plastoQ_OxRdtase_su3"/>
</dbReference>
<dbReference type="InterPro" id="IPR038430">
    <property type="entry name" value="NDAH_ubi_oxred_su3_sf"/>
</dbReference>
<dbReference type="PANTHER" id="PTHR11058">
    <property type="entry name" value="NADH-UBIQUINONE OXIDOREDUCTASE CHAIN 3"/>
    <property type="match status" value="1"/>
</dbReference>
<dbReference type="PANTHER" id="PTHR11058:SF9">
    <property type="entry name" value="NADH-UBIQUINONE OXIDOREDUCTASE CHAIN 3"/>
    <property type="match status" value="1"/>
</dbReference>
<dbReference type="Pfam" id="PF00507">
    <property type="entry name" value="Oxidored_q4"/>
    <property type="match status" value="1"/>
</dbReference>
<gene>
    <name evidence="1" type="primary">MT-ND3</name>
    <name type="synonym">MTND3</name>
    <name type="synonym">NADH3</name>
    <name type="synonym">ND3</name>
</gene>
<name>NU3M_PHYDA</name>
<evidence type="ECO:0000250" key="1">
    <source>
        <dbReference type="UniProtKB" id="P03897"/>
    </source>
</evidence>
<evidence type="ECO:0000250" key="2">
    <source>
        <dbReference type="UniProtKB" id="P03898"/>
    </source>
</evidence>
<evidence type="ECO:0000255" key="3"/>
<evidence type="ECO:0000305" key="4"/>
<feature type="chain" id="PRO_0000117803" description="NADH-ubiquinone oxidoreductase chain 3">
    <location>
        <begin position="1"/>
        <end position="115"/>
    </location>
</feature>
<feature type="transmembrane region" description="Helical" evidence="3">
    <location>
        <begin position="4"/>
        <end position="24"/>
    </location>
</feature>
<feature type="transmembrane region" description="Helical" evidence="3">
    <location>
        <begin position="55"/>
        <end position="75"/>
    </location>
</feature>
<feature type="transmembrane region" description="Helical" evidence="3">
    <location>
        <begin position="84"/>
        <end position="104"/>
    </location>
</feature>
<keyword id="KW-0249">Electron transport</keyword>
<keyword id="KW-0472">Membrane</keyword>
<keyword id="KW-0496">Mitochondrion</keyword>
<keyword id="KW-0999">Mitochondrion inner membrane</keyword>
<keyword id="KW-0520">NAD</keyword>
<keyword id="KW-0679">Respiratory chain</keyword>
<keyword id="KW-1278">Translocase</keyword>
<keyword id="KW-0812">Transmembrane</keyword>
<keyword id="KW-1133">Transmembrane helix</keyword>
<keyword id="KW-0813">Transport</keyword>
<keyword id="KW-0830">Ubiquinone</keyword>